<dbReference type="EMBL" id="U55791">
    <property type="status" value="NOT_ANNOTATED_CDS"/>
    <property type="molecule type" value="Genomic_RNA"/>
</dbReference>
<dbReference type="SMR" id="P0DJZ7"/>
<dbReference type="GO" id="GO:0030430">
    <property type="term" value="C:host cell cytoplasm"/>
    <property type="evidence" value="ECO:0007669"/>
    <property type="project" value="UniProtKB-SubCell"/>
</dbReference>
<dbReference type="GO" id="GO:0044196">
    <property type="term" value="C:host cell nucleolus"/>
    <property type="evidence" value="ECO:0007669"/>
    <property type="project" value="UniProtKB-SubCell"/>
</dbReference>
<gene>
    <name type="primary">Segment-9</name>
</gene>
<keyword id="KW-0024">Alternative initiation</keyword>
<keyword id="KW-1035">Host cytoplasm</keyword>
<keyword id="KW-1048">Host nucleus</keyword>
<feature type="chain" id="PRO_0000434884" description="Protein NS4">
    <location>
        <begin position="1"/>
        <end position="77"/>
    </location>
</feature>
<reference key="1">
    <citation type="journal article" date="1996" name="J. Virol.">
        <title>Phylogenetic comparison of the S3 gene of United States prototype strains of bluetongue virus with that of field isolates from California.</title>
        <authorList>
            <person name="de Mattos C.C."/>
            <person name="de Mattos C.A."/>
            <person name="MacLachlan N.J."/>
            <person name="Giavedoni L.D."/>
            <person name="Yilma T."/>
            <person name="Osburn B.I."/>
        </authorList>
    </citation>
    <scope>NUCLEOTIDE SEQUENCE [GENOMIC DNA]</scope>
    <source>
        <strain>13B89Z</strain>
    </source>
</reference>
<reference key="2">
    <citation type="journal article" date="2011" name="PLoS ONE">
        <title>Detection of a fourth orbivirus non-structural protein.</title>
        <authorList>
            <person name="Belhouchet M."/>
            <person name="Mohd Jaafar F."/>
            <person name="Firth A.E."/>
            <person name="Grimes J.M."/>
            <person name="Mertens P.P."/>
            <person name="Attoui H."/>
        </authorList>
    </citation>
    <scope>IDENTIFICATION</scope>
    <scope>SUBCELLULAR LOCATION</scope>
</reference>
<reference key="3">
    <citation type="journal article" date="2011" name="PLoS Pathog.">
        <title>Identification and characterization of a novel non-structural protein of bluetongue virus.</title>
        <authorList>
            <person name="Ratinier M."/>
            <person name="Caporale M."/>
            <person name="Golder M."/>
            <person name="Franzoni G."/>
            <person name="Allan K."/>
            <person name="Nunes S.F."/>
            <person name="Armezzani A."/>
            <person name="Bayoumy A."/>
            <person name="Rixon F."/>
            <person name="Shaw A."/>
            <person name="Palmarini M."/>
        </authorList>
    </citation>
    <scope>FUNCTION</scope>
    <scope>SUBCELLULAR LOCATION</scope>
</reference>
<protein>
    <recommendedName>
        <fullName>Protein NS4</fullName>
    </recommendedName>
</protein>
<comment type="function">
    <text evidence="2">May function as a nucleic acid binding protein that modulates transcription of genes participating in the IFN response.</text>
</comment>
<comment type="subcellular location">
    <subcellularLocation>
        <location evidence="1">Host cytoplasm</location>
    </subcellularLocation>
    <subcellularLocation>
        <location evidence="1">Host nucleus</location>
    </subcellularLocation>
    <subcellularLocation>
        <location evidence="2">Host nucleus</location>
        <location evidence="2">Host nucleolus</location>
    </subcellularLocation>
</comment>
<comment type="alternative products">
    <event type="alternative initiation"/>
    <isoform>
        <id>P0DJZ7-1</id>
        <name>Protein NS4</name>
        <sequence type="displayed"/>
    </isoform>
    <isoform>
        <id>P0C6L1-1</id>
        <name>Protein VP6</name>
        <sequence type="external"/>
    </isoform>
</comment>
<proteinExistence type="predicted"/>
<organismHost>
    <name type="scientific">Antilocapra americana</name>
    <name type="common">Pronghorn</name>
    <dbReference type="NCBI Taxonomy" id="9891"/>
</organismHost>
<organismHost>
    <name type="scientific">Bos taurus</name>
    <name type="common">Bovine</name>
    <dbReference type="NCBI Taxonomy" id="9913"/>
</organismHost>
<organismHost>
    <name type="scientific">Capra hircus</name>
    <name type="common">Goat</name>
    <dbReference type="NCBI Taxonomy" id="9925"/>
</organismHost>
<organismHost>
    <name type="scientific">Culicoides variipennis</name>
    <name type="common">Biting midge</name>
    <dbReference type="NCBI Taxonomy" id="46212"/>
</organismHost>
<organismHost>
    <name type="scientific">Ovis aries</name>
    <name type="common">Sheep</name>
    <dbReference type="NCBI Taxonomy" id="9940"/>
</organismHost>
<name>NS4_BTVBZ</name>
<accession>P0DJZ7</accession>
<sequence length="77" mass="9511">MVRGRNRRAARRKRAAKRLKMQMWIDAYILQWDLDQAQKDLENARTRMLTEEMERLEEEVEMLMRELELLERMEEDG</sequence>
<evidence type="ECO:0000269" key="1">
    <source>
    </source>
</evidence>
<evidence type="ECO:0000269" key="2">
    <source>
    </source>
</evidence>
<organism>
    <name type="scientific">Bluetongue virus 13 (isolate 13B89Z)</name>
    <name type="common">BTV 13</name>
    <dbReference type="NCBI Taxonomy" id="355314"/>
    <lineage>
        <taxon>Viruses</taxon>
        <taxon>Riboviria</taxon>
        <taxon>Orthornavirae</taxon>
        <taxon>Duplornaviricota</taxon>
        <taxon>Resentoviricetes</taxon>
        <taxon>Reovirales</taxon>
        <taxon>Sedoreoviridae</taxon>
        <taxon>Orbivirus</taxon>
        <taxon>Bluetongue virus</taxon>
    </lineage>
</organism>